<keyword id="KW-0067">ATP-binding</keyword>
<keyword id="KW-0143">Chaperone</keyword>
<keyword id="KW-0175">Coiled coil</keyword>
<keyword id="KW-0547">Nucleotide-binding</keyword>
<keyword id="KW-0647">Proteasome</keyword>
<keyword id="KW-1185">Reference proteome</keyword>
<proteinExistence type="inferred from homology"/>
<evidence type="ECO:0000255" key="1">
    <source>
        <dbReference type="HAMAP-Rule" id="MF_02112"/>
    </source>
</evidence>
<evidence type="ECO:0000256" key="2">
    <source>
        <dbReference type="SAM" id="MobiDB-lite"/>
    </source>
</evidence>
<feature type="chain" id="PRO_0000397008" description="Proteasome-associated ATPase">
    <location>
        <begin position="1"/>
        <end position="592"/>
    </location>
</feature>
<feature type="region of interest" description="Disordered" evidence="2">
    <location>
        <begin position="1"/>
        <end position="24"/>
    </location>
</feature>
<feature type="region of interest" description="Docks into pockets in the proteasome alpha-ring" evidence="1">
    <location>
        <begin position="591"/>
        <end position="592"/>
    </location>
</feature>
<feature type="coiled-coil region" evidence="1">
    <location>
        <begin position="25"/>
        <end position="99"/>
    </location>
</feature>
<feature type="compositionally biased region" description="Acidic residues" evidence="2">
    <location>
        <begin position="1"/>
        <end position="11"/>
    </location>
</feature>
<feature type="binding site" evidence="1">
    <location>
        <begin position="281"/>
        <end position="286"/>
    </location>
    <ligand>
        <name>ATP</name>
        <dbReference type="ChEBI" id="CHEBI:30616"/>
    </ligand>
</feature>
<name>ARC_NAKMY</name>
<dbReference type="EMBL" id="CP001737">
    <property type="protein sequence ID" value="ACV79313.1"/>
    <property type="molecule type" value="Genomic_DNA"/>
</dbReference>
<dbReference type="RefSeq" id="WP_015748186.1">
    <property type="nucleotide sequence ID" value="NC_013235.1"/>
</dbReference>
<dbReference type="SMR" id="C8XAR0"/>
<dbReference type="FunCoup" id="C8XAR0">
    <property type="interactions" value="146"/>
</dbReference>
<dbReference type="STRING" id="479431.Namu_2975"/>
<dbReference type="KEGG" id="nml:Namu_2975"/>
<dbReference type="eggNOG" id="COG1222">
    <property type="taxonomic scope" value="Bacteria"/>
</dbReference>
<dbReference type="HOGENOM" id="CLU_036054_0_0_11"/>
<dbReference type="InParanoid" id="C8XAR0"/>
<dbReference type="OrthoDB" id="9809379at2"/>
<dbReference type="UniPathway" id="UPA00997"/>
<dbReference type="Proteomes" id="UP000002218">
    <property type="component" value="Chromosome"/>
</dbReference>
<dbReference type="GO" id="GO:0000502">
    <property type="term" value="C:proteasome complex"/>
    <property type="evidence" value="ECO:0007669"/>
    <property type="project" value="UniProtKB-KW"/>
</dbReference>
<dbReference type="GO" id="GO:0005524">
    <property type="term" value="F:ATP binding"/>
    <property type="evidence" value="ECO:0007669"/>
    <property type="project" value="UniProtKB-UniRule"/>
</dbReference>
<dbReference type="GO" id="GO:0016887">
    <property type="term" value="F:ATP hydrolysis activity"/>
    <property type="evidence" value="ECO:0007669"/>
    <property type="project" value="UniProtKB-UniRule"/>
</dbReference>
<dbReference type="GO" id="GO:0019941">
    <property type="term" value="P:modification-dependent protein catabolic process"/>
    <property type="evidence" value="ECO:0007669"/>
    <property type="project" value="InterPro"/>
</dbReference>
<dbReference type="GO" id="GO:0010498">
    <property type="term" value="P:proteasomal protein catabolic process"/>
    <property type="evidence" value="ECO:0007669"/>
    <property type="project" value="InterPro"/>
</dbReference>
<dbReference type="FunFam" id="3.40.50.300:FF:000155">
    <property type="entry name" value="AAA ATPase forming ring-shaped complexes"/>
    <property type="match status" value="1"/>
</dbReference>
<dbReference type="Gene3D" id="1.10.8.60">
    <property type="match status" value="1"/>
</dbReference>
<dbReference type="Gene3D" id="1.20.5.170">
    <property type="match status" value="1"/>
</dbReference>
<dbReference type="Gene3D" id="2.40.50.140">
    <property type="entry name" value="Nucleic acid-binding proteins"/>
    <property type="match status" value="2"/>
</dbReference>
<dbReference type="Gene3D" id="3.40.50.300">
    <property type="entry name" value="P-loop containing nucleotide triphosphate hydrolases"/>
    <property type="match status" value="1"/>
</dbReference>
<dbReference type="HAMAP" id="MF_02112">
    <property type="entry name" value="ARC_ATPase"/>
    <property type="match status" value="1"/>
</dbReference>
<dbReference type="InterPro" id="IPR003593">
    <property type="entry name" value="AAA+_ATPase"/>
</dbReference>
<dbReference type="InterPro" id="IPR050168">
    <property type="entry name" value="AAA_ATPase_domain"/>
</dbReference>
<dbReference type="InterPro" id="IPR003959">
    <property type="entry name" value="ATPase_AAA_core"/>
</dbReference>
<dbReference type="InterPro" id="IPR003960">
    <property type="entry name" value="ATPase_AAA_CS"/>
</dbReference>
<dbReference type="InterPro" id="IPR012340">
    <property type="entry name" value="NA-bd_OB-fold"/>
</dbReference>
<dbReference type="InterPro" id="IPR027417">
    <property type="entry name" value="P-loop_NTPase"/>
</dbReference>
<dbReference type="InterPro" id="IPR032501">
    <property type="entry name" value="Prot_ATP_ID_OB_2nd"/>
</dbReference>
<dbReference type="InterPro" id="IPR041626">
    <property type="entry name" value="Prot_ATP_ID_OB_N"/>
</dbReference>
<dbReference type="InterPro" id="IPR022482">
    <property type="entry name" value="Proteasome_ATPase"/>
</dbReference>
<dbReference type="NCBIfam" id="TIGR03689">
    <property type="entry name" value="pup_AAA"/>
    <property type="match status" value="1"/>
</dbReference>
<dbReference type="PANTHER" id="PTHR23077">
    <property type="entry name" value="AAA-FAMILY ATPASE"/>
    <property type="match status" value="1"/>
</dbReference>
<dbReference type="PANTHER" id="PTHR23077:SF144">
    <property type="entry name" value="PROTEASOME-ASSOCIATED ATPASE"/>
    <property type="match status" value="1"/>
</dbReference>
<dbReference type="Pfam" id="PF00004">
    <property type="entry name" value="AAA"/>
    <property type="match status" value="1"/>
</dbReference>
<dbReference type="Pfam" id="PF16450">
    <property type="entry name" value="Prot_ATP_ID_OB_C"/>
    <property type="match status" value="1"/>
</dbReference>
<dbReference type="Pfam" id="PF17758">
    <property type="entry name" value="Prot_ATP_ID_OB_N"/>
    <property type="match status" value="1"/>
</dbReference>
<dbReference type="SMART" id="SM00382">
    <property type="entry name" value="AAA"/>
    <property type="match status" value="1"/>
</dbReference>
<dbReference type="SUPFAM" id="SSF52540">
    <property type="entry name" value="P-loop containing nucleoside triphosphate hydrolases"/>
    <property type="match status" value="1"/>
</dbReference>
<dbReference type="PROSITE" id="PS00674">
    <property type="entry name" value="AAA"/>
    <property type="match status" value="1"/>
</dbReference>
<sequence length="592" mass="65654">MTGYDSSEEAERDSSPADGYRQTPAQLSAQIRVLNDEIAQLRRRLAITPTDTRPLERQLTESANRINALSERNEKLVVTLRDARAQLLQLKEEVDRLAQPPSGYGVFLSAGPEGTAEVFTGGRRMRLAVSPTVEVEQLKRGQQLRLNEALTVVEAAQFDVIGEVCSLREVLDGDRALVVGHADEERVVHLAAPLMDIALKPGDSLLIDSKAGYAYERVPKSEVEDLVLEEVPDVAYEDIGGLTRQIEQIRDAVELPFLHADLYREYKLRPPKGVLLYGPPGCGKTLIAKAVANSLAKKVAALRGEETHTSYFLNIKGPELLNKYVGETERTIRLIFQRAREKASDGTPVIVFFDEMDSVFRTRGTGVSSDVETTIVPQLLSEIDGVEGLENVIVIGASNREDMIDPAILRPGRLDVKIKIERPDAEAARDIFTKYLVTELPIHPEDLAEFGGDRQACLSGMIQHTVERMYTETDENRFLEVTYANGDKEVLYFKDFNSGAMIQNIVDRAKKSAIKSRIETGVNGLRVSQLLEAITDEFAENEDLPNTTNPDDWARISGKKGERIVYIRTLVSGKQSEGSRAIDTASNTGQYL</sequence>
<comment type="function">
    <text evidence="1">ATPase which is responsible for recognizing, binding, unfolding and translocation of pupylated proteins into the bacterial 20S proteasome core particle. May be essential for opening the gate of the 20S proteasome via an interaction with its C-terminus, thereby allowing substrate entry and access to the site of proteolysis. Thus, the C-termini of the proteasomal ATPase may function like a 'key in a lock' to induce gate opening and therefore regulate proteolysis.</text>
</comment>
<comment type="pathway">
    <text evidence="1">Protein degradation; proteasomal Pup-dependent pathway.</text>
</comment>
<comment type="subunit">
    <text evidence="1">Homohexamer. Assembles into a hexameric ring structure that caps the 20S proteasome core. Strongly interacts with the prokaryotic ubiquitin-like protein Pup through a hydrophobic interface; the interacting region of ARC lies in its N-terminal coiled-coil domain. There is one Pup binding site per ARC hexamer ring. Upon ATP-binding, the C-terminus of ARC interacts with the alpha-rings of the proteasome core, possibly by binding to the intersubunit pockets.</text>
</comment>
<comment type="domain">
    <text evidence="1">Consists of three main regions, an N-terminal coiled-coil domain that binds to protein Pup and functions as a docking station, an interdomain involved in ARC hexamerization, and a C-terminal ATPase domain of the AAA type.</text>
</comment>
<comment type="similarity">
    <text evidence="1">Belongs to the AAA ATPase family.</text>
</comment>
<reference key="1">
    <citation type="submission" date="2009-09" db="EMBL/GenBank/DDBJ databases">
        <title>The complete genome of Nakamurella multipartita DSM 44233.</title>
        <authorList>
            <consortium name="US DOE Joint Genome Institute (JGI-PGF)"/>
            <person name="Lucas S."/>
            <person name="Copeland A."/>
            <person name="Lapidus A."/>
            <person name="Glavina del Rio T."/>
            <person name="Dalin E."/>
            <person name="Tice H."/>
            <person name="Bruce D."/>
            <person name="Goodwin L."/>
            <person name="Pitluck S."/>
            <person name="Kyrpides N."/>
            <person name="Mavromatis K."/>
            <person name="Ivanova N."/>
            <person name="Ovchinnikova G."/>
            <person name="Sims D."/>
            <person name="Meincke L."/>
            <person name="Brettin T."/>
            <person name="Detter J.C."/>
            <person name="Han C."/>
            <person name="Larimer F."/>
            <person name="Land M."/>
            <person name="Hauser L."/>
            <person name="Markowitz V."/>
            <person name="Cheng J.-F."/>
            <person name="Hugenholtz P."/>
            <person name="Woyke T."/>
            <person name="Wu D."/>
            <person name="Klenk H.-P."/>
            <person name="Eisen J.A."/>
        </authorList>
    </citation>
    <scope>NUCLEOTIDE SEQUENCE [LARGE SCALE GENOMIC DNA]</scope>
    <source>
        <strain>ATCC 700099 / DSM 44233 / CIP 104796 / JCM 9543 / NBRC 105858 / Y-104</strain>
    </source>
</reference>
<organism>
    <name type="scientific">Nakamurella multipartita (strain ATCC 700099 / DSM 44233 / CIP 104796 / JCM 9543 / NBRC 105858 / Y-104)</name>
    <name type="common">Microsphaera multipartita</name>
    <dbReference type="NCBI Taxonomy" id="479431"/>
    <lineage>
        <taxon>Bacteria</taxon>
        <taxon>Bacillati</taxon>
        <taxon>Actinomycetota</taxon>
        <taxon>Actinomycetes</taxon>
        <taxon>Nakamurellales</taxon>
        <taxon>Nakamurellaceae</taxon>
        <taxon>Nakamurella</taxon>
    </lineage>
</organism>
<protein>
    <recommendedName>
        <fullName evidence="1">Proteasome-associated ATPase</fullName>
    </recommendedName>
    <alternativeName>
        <fullName evidence="1">AAA ATPase forming ring-shaped complexes</fullName>
        <shortName evidence="1">ARC</shortName>
    </alternativeName>
    <alternativeName>
        <fullName evidence="1">Proteasomal ATPase</fullName>
    </alternativeName>
</protein>
<gene>
    <name evidence="1" type="primary">arc</name>
    <name type="ordered locus">Namu_2975</name>
</gene>
<accession>C8XAR0</accession>